<sequence>MSVLTFLKPRGSGSVARERLQLILAHERVENGRPDLIITLREEILNVIAKHVTVERDKVQIKLERGEGVSTLGVDIEFPVDAVIKPKAKAKRAIA</sequence>
<feature type="chain" id="PRO_1000191288" description="Cell division topological specificity factor">
    <location>
        <begin position="1"/>
        <end position="95"/>
    </location>
</feature>
<comment type="function">
    <text evidence="1">Prevents the cell division inhibition by proteins MinC and MinD at internal division sites while permitting inhibition at polar sites. This ensures cell division at the proper site by restricting the formation of a division septum at the midpoint of the long axis of the cell.</text>
</comment>
<comment type="similarity">
    <text evidence="1">Belongs to the MinE family.</text>
</comment>
<gene>
    <name evidence="1" type="primary">minE</name>
    <name type="ordered locus">Mchl_1430</name>
</gene>
<proteinExistence type="inferred from homology"/>
<accession>B7KRU8</accession>
<protein>
    <recommendedName>
        <fullName evidence="1">Cell division topological specificity factor</fullName>
    </recommendedName>
</protein>
<organism>
    <name type="scientific">Methylorubrum extorquens (strain CM4 / NCIMB 13688)</name>
    <name type="common">Methylobacterium extorquens</name>
    <dbReference type="NCBI Taxonomy" id="440085"/>
    <lineage>
        <taxon>Bacteria</taxon>
        <taxon>Pseudomonadati</taxon>
        <taxon>Pseudomonadota</taxon>
        <taxon>Alphaproteobacteria</taxon>
        <taxon>Hyphomicrobiales</taxon>
        <taxon>Methylobacteriaceae</taxon>
        <taxon>Methylorubrum</taxon>
    </lineage>
</organism>
<name>MINE_METC4</name>
<evidence type="ECO:0000255" key="1">
    <source>
        <dbReference type="HAMAP-Rule" id="MF_00262"/>
    </source>
</evidence>
<keyword id="KW-0131">Cell cycle</keyword>
<keyword id="KW-0132">Cell division</keyword>
<reference key="1">
    <citation type="submission" date="2008-12" db="EMBL/GenBank/DDBJ databases">
        <title>Complete sequence of chromosome of Methylobacterium chloromethanicum CM4.</title>
        <authorList>
            <consortium name="US DOE Joint Genome Institute"/>
            <person name="Lucas S."/>
            <person name="Copeland A."/>
            <person name="Lapidus A."/>
            <person name="Glavina del Rio T."/>
            <person name="Dalin E."/>
            <person name="Tice H."/>
            <person name="Bruce D."/>
            <person name="Goodwin L."/>
            <person name="Pitluck S."/>
            <person name="Chertkov O."/>
            <person name="Brettin T."/>
            <person name="Detter J.C."/>
            <person name="Han C."/>
            <person name="Larimer F."/>
            <person name="Land M."/>
            <person name="Hauser L."/>
            <person name="Kyrpides N."/>
            <person name="Mikhailova N."/>
            <person name="Marx C."/>
            <person name="Richardson P."/>
        </authorList>
    </citation>
    <scope>NUCLEOTIDE SEQUENCE [LARGE SCALE GENOMIC DNA]</scope>
    <source>
        <strain>CM4 / NCIMB 13688</strain>
    </source>
</reference>
<dbReference type="EMBL" id="CP001298">
    <property type="protein sequence ID" value="ACK82310.1"/>
    <property type="molecule type" value="Genomic_DNA"/>
</dbReference>
<dbReference type="RefSeq" id="WP_003602598.1">
    <property type="nucleotide sequence ID" value="NC_011757.1"/>
</dbReference>
<dbReference type="SMR" id="B7KRU8"/>
<dbReference type="GeneID" id="72988894"/>
<dbReference type="KEGG" id="mch:Mchl_1430"/>
<dbReference type="HOGENOM" id="CLU_137929_2_0_5"/>
<dbReference type="Proteomes" id="UP000002385">
    <property type="component" value="Chromosome"/>
</dbReference>
<dbReference type="GO" id="GO:0051301">
    <property type="term" value="P:cell division"/>
    <property type="evidence" value="ECO:0007669"/>
    <property type="project" value="UniProtKB-KW"/>
</dbReference>
<dbReference type="GO" id="GO:0032955">
    <property type="term" value="P:regulation of division septum assembly"/>
    <property type="evidence" value="ECO:0007669"/>
    <property type="project" value="InterPro"/>
</dbReference>
<dbReference type="Gene3D" id="3.30.1070.10">
    <property type="entry name" value="Cell division topological specificity factor MinE"/>
    <property type="match status" value="1"/>
</dbReference>
<dbReference type="HAMAP" id="MF_00262">
    <property type="entry name" value="MinE"/>
    <property type="match status" value="1"/>
</dbReference>
<dbReference type="InterPro" id="IPR005527">
    <property type="entry name" value="MinE"/>
</dbReference>
<dbReference type="InterPro" id="IPR036707">
    <property type="entry name" value="MinE_sf"/>
</dbReference>
<dbReference type="NCBIfam" id="TIGR01215">
    <property type="entry name" value="minE"/>
    <property type="match status" value="1"/>
</dbReference>
<dbReference type="NCBIfam" id="NF001422">
    <property type="entry name" value="PRK00296.1"/>
    <property type="match status" value="1"/>
</dbReference>
<dbReference type="Pfam" id="PF03776">
    <property type="entry name" value="MinE"/>
    <property type="match status" value="1"/>
</dbReference>
<dbReference type="SUPFAM" id="SSF55229">
    <property type="entry name" value="Cell division protein MinE topological specificity domain"/>
    <property type="match status" value="1"/>
</dbReference>